<evidence type="ECO:0000255" key="1">
    <source>
        <dbReference type="HAMAP-Rule" id="MF_01345"/>
    </source>
</evidence>
<evidence type="ECO:0000305" key="2"/>
<reference key="1">
    <citation type="journal article" date="2001" name="Nature">
        <title>Genome sequence of Yersinia pestis, the causative agent of plague.</title>
        <authorList>
            <person name="Parkhill J."/>
            <person name="Wren B.W."/>
            <person name="Thomson N.R."/>
            <person name="Titball R.W."/>
            <person name="Holden M.T.G."/>
            <person name="Prentice M.B."/>
            <person name="Sebaihia M."/>
            <person name="James K.D."/>
            <person name="Churcher C.M."/>
            <person name="Mungall K.L."/>
            <person name="Baker S."/>
            <person name="Basham D."/>
            <person name="Bentley S.D."/>
            <person name="Brooks K."/>
            <person name="Cerdeno-Tarraga A.-M."/>
            <person name="Chillingworth T."/>
            <person name="Cronin A."/>
            <person name="Davies R.M."/>
            <person name="Davis P."/>
            <person name="Dougan G."/>
            <person name="Feltwell T."/>
            <person name="Hamlin N."/>
            <person name="Holroyd S."/>
            <person name="Jagels K."/>
            <person name="Karlyshev A.V."/>
            <person name="Leather S."/>
            <person name="Moule S."/>
            <person name="Oyston P.C.F."/>
            <person name="Quail M.A."/>
            <person name="Rutherford K.M."/>
            <person name="Simmonds M."/>
            <person name="Skelton J."/>
            <person name="Stevens K."/>
            <person name="Whitehead S."/>
            <person name="Barrell B.G."/>
        </authorList>
    </citation>
    <scope>NUCLEOTIDE SEQUENCE [LARGE SCALE GENOMIC DNA]</scope>
    <source>
        <strain>CO-92 / Biovar Orientalis</strain>
    </source>
</reference>
<reference key="2">
    <citation type="journal article" date="2002" name="J. Bacteriol.">
        <title>Genome sequence of Yersinia pestis KIM.</title>
        <authorList>
            <person name="Deng W."/>
            <person name="Burland V."/>
            <person name="Plunkett G. III"/>
            <person name="Boutin A."/>
            <person name="Mayhew G.F."/>
            <person name="Liss P."/>
            <person name="Perna N.T."/>
            <person name="Rose D.J."/>
            <person name="Mau B."/>
            <person name="Zhou S."/>
            <person name="Schwartz D.C."/>
            <person name="Fetherston J.D."/>
            <person name="Lindler L.E."/>
            <person name="Brubaker R.R."/>
            <person name="Plano G.V."/>
            <person name="Straley S.C."/>
            <person name="McDonough K.A."/>
            <person name="Nilles M.L."/>
            <person name="Matson J.S."/>
            <person name="Blattner F.R."/>
            <person name="Perry R.D."/>
        </authorList>
    </citation>
    <scope>NUCLEOTIDE SEQUENCE [LARGE SCALE GENOMIC DNA]</scope>
    <source>
        <strain>KIM10+ / Biovar Mediaevalis</strain>
    </source>
</reference>
<reference key="3">
    <citation type="journal article" date="2004" name="DNA Res.">
        <title>Complete genome sequence of Yersinia pestis strain 91001, an isolate avirulent to humans.</title>
        <authorList>
            <person name="Song Y."/>
            <person name="Tong Z."/>
            <person name="Wang J."/>
            <person name="Wang L."/>
            <person name="Guo Z."/>
            <person name="Han Y."/>
            <person name="Zhang J."/>
            <person name="Pei D."/>
            <person name="Zhou D."/>
            <person name="Qin H."/>
            <person name="Pang X."/>
            <person name="Han Y."/>
            <person name="Zhai J."/>
            <person name="Li M."/>
            <person name="Cui B."/>
            <person name="Qi Z."/>
            <person name="Jin L."/>
            <person name="Dai R."/>
            <person name="Chen F."/>
            <person name="Li S."/>
            <person name="Ye C."/>
            <person name="Du Z."/>
            <person name="Lin W."/>
            <person name="Wang J."/>
            <person name="Yu J."/>
            <person name="Yang H."/>
            <person name="Wang J."/>
            <person name="Huang P."/>
            <person name="Yang R."/>
        </authorList>
    </citation>
    <scope>NUCLEOTIDE SEQUENCE [LARGE SCALE GENOMIC DNA]</scope>
    <source>
        <strain>91001 / Biovar Mediaevalis</strain>
    </source>
</reference>
<accession>Q8ZJA3</accession>
<accession>Q0WK89</accession>
<accession>Q74XY9</accession>
<name>RS17_YERPE</name>
<feature type="chain" id="PRO_0000233620" description="Small ribosomal subunit protein uS17">
    <location>
        <begin position="1"/>
        <end position="84"/>
    </location>
</feature>
<sequence length="84" mass="9716">MTDQIRTLQGRVVSDKMEKSMVVAIERVVKHPIYGKFIRRTTKLHVHDENNECGIGDVVEIRECRPLSKTKSWTLVRVVEKAIL</sequence>
<gene>
    <name evidence="1" type="primary">rpsQ</name>
    <name type="ordered locus">YPO0219</name>
    <name type="ordered locus">y3998.1</name>
    <name type="ordered locus">YP_0216</name>
</gene>
<proteinExistence type="inferred from homology"/>
<comment type="function">
    <text evidence="1">One of the primary rRNA binding proteins, it binds specifically to the 5'-end of 16S ribosomal RNA.</text>
</comment>
<comment type="subunit">
    <text evidence="1">Part of the 30S ribosomal subunit.</text>
</comment>
<comment type="similarity">
    <text evidence="1">Belongs to the universal ribosomal protein uS17 family.</text>
</comment>
<dbReference type="EMBL" id="AL590842">
    <property type="protein sequence ID" value="CAL18901.1"/>
    <property type="molecule type" value="Genomic_DNA"/>
</dbReference>
<dbReference type="EMBL" id="AE009952">
    <property type="status" value="NOT_ANNOTATED_CDS"/>
    <property type="molecule type" value="Genomic_DNA"/>
</dbReference>
<dbReference type="EMBL" id="AE017042">
    <property type="protein sequence ID" value="AAS60492.1"/>
    <property type="molecule type" value="Genomic_DNA"/>
</dbReference>
<dbReference type="PIR" id="AC0027">
    <property type="entry name" value="AC0027"/>
</dbReference>
<dbReference type="RefSeq" id="WP_002228135.1">
    <property type="nucleotide sequence ID" value="NZ_WUCM01000078.1"/>
</dbReference>
<dbReference type="RefSeq" id="YP_002345299.1">
    <property type="nucleotide sequence ID" value="NC_003143.1"/>
</dbReference>
<dbReference type="SMR" id="Q8ZJA3"/>
<dbReference type="STRING" id="214092.YPO0219"/>
<dbReference type="PaxDb" id="214092-YPO0219"/>
<dbReference type="EnsemblBacteria" id="AAS60492">
    <property type="protein sequence ID" value="AAS60492"/>
    <property type="gene ID" value="YP_0216"/>
</dbReference>
<dbReference type="GeneID" id="97454240"/>
<dbReference type="KEGG" id="ype:YPO0219"/>
<dbReference type="KEGG" id="ypm:YP_0216"/>
<dbReference type="eggNOG" id="COG0186">
    <property type="taxonomic scope" value="Bacteria"/>
</dbReference>
<dbReference type="HOGENOM" id="CLU_073626_1_1_6"/>
<dbReference type="OMA" id="HPMYGKF"/>
<dbReference type="OrthoDB" id="9811714at2"/>
<dbReference type="Proteomes" id="UP000000815">
    <property type="component" value="Chromosome"/>
</dbReference>
<dbReference type="Proteomes" id="UP000001019">
    <property type="component" value="Chromosome"/>
</dbReference>
<dbReference type="Proteomes" id="UP000002490">
    <property type="component" value="Chromosome"/>
</dbReference>
<dbReference type="GO" id="GO:0022627">
    <property type="term" value="C:cytosolic small ribosomal subunit"/>
    <property type="evidence" value="ECO:0000318"/>
    <property type="project" value="GO_Central"/>
</dbReference>
<dbReference type="GO" id="GO:0019843">
    <property type="term" value="F:rRNA binding"/>
    <property type="evidence" value="ECO:0007669"/>
    <property type="project" value="UniProtKB-UniRule"/>
</dbReference>
<dbReference type="GO" id="GO:0003735">
    <property type="term" value="F:structural constituent of ribosome"/>
    <property type="evidence" value="ECO:0000318"/>
    <property type="project" value="GO_Central"/>
</dbReference>
<dbReference type="GO" id="GO:0006412">
    <property type="term" value="P:translation"/>
    <property type="evidence" value="ECO:0007669"/>
    <property type="project" value="UniProtKB-UniRule"/>
</dbReference>
<dbReference type="CDD" id="cd00364">
    <property type="entry name" value="Ribosomal_uS17"/>
    <property type="match status" value="1"/>
</dbReference>
<dbReference type="FunFam" id="2.40.50.140:FF:000014">
    <property type="entry name" value="30S ribosomal protein S17"/>
    <property type="match status" value="1"/>
</dbReference>
<dbReference type="Gene3D" id="2.40.50.140">
    <property type="entry name" value="Nucleic acid-binding proteins"/>
    <property type="match status" value="1"/>
</dbReference>
<dbReference type="HAMAP" id="MF_01345_B">
    <property type="entry name" value="Ribosomal_uS17_B"/>
    <property type="match status" value="1"/>
</dbReference>
<dbReference type="InterPro" id="IPR012340">
    <property type="entry name" value="NA-bd_OB-fold"/>
</dbReference>
<dbReference type="InterPro" id="IPR000266">
    <property type="entry name" value="Ribosomal_uS17"/>
</dbReference>
<dbReference type="InterPro" id="IPR019984">
    <property type="entry name" value="Ribosomal_uS17_bact/chlr"/>
</dbReference>
<dbReference type="InterPro" id="IPR019979">
    <property type="entry name" value="Ribosomal_uS17_CS"/>
</dbReference>
<dbReference type="NCBIfam" id="NF004123">
    <property type="entry name" value="PRK05610.1"/>
    <property type="match status" value="1"/>
</dbReference>
<dbReference type="NCBIfam" id="TIGR03635">
    <property type="entry name" value="uS17_bact"/>
    <property type="match status" value="1"/>
</dbReference>
<dbReference type="PANTHER" id="PTHR10744">
    <property type="entry name" value="40S RIBOSOMAL PROTEIN S11 FAMILY MEMBER"/>
    <property type="match status" value="1"/>
</dbReference>
<dbReference type="PANTHER" id="PTHR10744:SF1">
    <property type="entry name" value="SMALL RIBOSOMAL SUBUNIT PROTEIN US17M"/>
    <property type="match status" value="1"/>
</dbReference>
<dbReference type="Pfam" id="PF00366">
    <property type="entry name" value="Ribosomal_S17"/>
    <property type="match status" value="1"/>
</dbReference>
<dbReference type="PRINTS" id="PR00973">
    <property type="entry name" value="RIBOSOMALS17"/>
</dbReference>
<dbReference type="SUPFAM" id="SSF50249">
    <property type="entry name" value="Nucleic acid-binding proteins"/>
    <property type="match status" value="1"/>
</dbReference>
<dbReference type="PROSITE" id="PS00056">
    <property type="entry name" value="RIBOSOMAL_S17"/>
    <property type="match status" value="1"/>
</dbReference>
<keyword id="KW-1185">Reference proteome</keyword>
<keyword id="KW-0687">Ribonucleoprotein</keyword>
<keyword id="KW-0689">Ribosomal protein</keyword>
<keyword id="KW-0694">RNA-binding</keyword>
<keyword id="KW-0699">rRNA-binding</keyword>
<protein>
    <recommendedName>
        <fullName evidence="1">Small ribosomal subunit protein uS17</fullName>
    </recommendedName>
    <alternativeName>
        <fullName evidence="2">30S ribosomal protein S17</fullName>
    </alternativeName>
</protein>
<organism>
    <name type="scientific">Yersinia pestis</name>
    <dbReference type="NCBI Taxonomy" id="632"/>
    <lineage>
        <taxon>Bacteria</taxon>
        <taxon>Pseudomonadati</taxon>
        <taxon>Pseudomonadota</taxon>
        <taxon>Gammaproteobacteria</taxon>
        <taxon>Enterobacterales</taxon>
        <taxon>Yersiniaceae</taxon>
        <taxon>Yersinia</taxon>
    </lineage>
</organism>